<reference key="1">
    <citation type="journal article" date="2008" name="J. Bacteriol.">
        <title>Insights into the environmental resistance gene pool from the genome sequence of the multidrug-resistant environmental isolate Escherichia coli SMS-3-5.</title>
        <authorList>
            <person name="Fricke W.F."/>
            <person name="Wright M.S."/>
            <person name="Lindell A.H."/>
            <person name="Harkins D.M."/>
            <person name="Baker-Austin C."/>
            <person name="Ravel J."/>
            <person name="Stepanauskas R."/>
        </authorList>
    </citation>
    <scope>NUCLEOTIDE SEQUENCE [LARGE SCALE GENOMIC DNA]</scope>
    <source>
        <strain>SMS-3-5 / SECEC</strain>
    </source>
</reference>
<gene>
    <name evidence="1" type="primary">yacG</name>
    <name type="ordered locus">EcSMS35_0105</name>
</gene>
<accession>B1LG37</accession>
<evidence type="ECO:0000255" key="1">
    <source>
        <dbReference type="HAMAP-Rule" id="MF_00649"/>
    </source>
</evidence>
<evidence type="ECO:0000256" key="2">
    <source>
        <dbReference type="SAM" id="MobiDB-lite"/>
    </source>
</evidence>
<sequence length="65" mass="7306">MSETITVNCPTCGKTVVWGEISPFRPFCSKRCQLIDLGEWAAEEKRIPSSGDLSESDDWSEEPKQ</sequence>
<name>YACG_ECOSM</name>
<comment type="function">
    <text evidence="1">Inhibits all the catalytic activities of DNA gyrase by preventing its interaction with DNA. Acts by binding directly to the C-terminal domain of GyrB, which probably disrupts DNA binding by the gyrase.</text>
</comment>
<comment type="cofactor">
    <cofactor evidence="1">
        <name>Zn(2+)</name>
        <dbReference type="ChEBI" id="CHEBI:29105"/>
    </cofactor>
    <text evidence="1">Binds 1 zinc ion.</text>
</comment>
<comment type="subunit">
    <text evidence="1">Interacts with GyrB.</text>
</comment>
<comment type="similarity">
    <text evidence="1">Belongs to the DNA gyrase inhibitor YacG family.</text>
</comment>
<protein>
    <recommendedName>
        <fullName evidence="1">DNA gyrase inhibitor YacG</fullName>
    </recommendedName>
</protein>
<feature type="chain" id="PRO_1000130962" description="DNA gyrase inhibitor YacG">
    <location>
        <begin position="1"/>
        <end position="65"/>
    </location>
</feature>
<feature type="region of interest" description="Disordered" evidence="2">
    <location>
        <begin position="45"/>
        <end position="65"/>
    </location>
</feature>
<feature type="compositionally biased region" description="Acidic residues" evidence="2">
    <location>
        <begin position="54"/>
        <end position="65"/>
    </location>
</feature>
<feature type="binding site" evidence="1">
    <location>
        <position position="9"/>
    </location>
    <ligand>
        <name>Zn(2+)</name>
        <dbReference type="ChEBI" id="CHEBI:29105"/>
    </ligand>
</feature>
<feature type="binding site" evidence="1">
    <location>
        <position position="12"/>
    </location>
    <ligand>
        <name>Zn(2+)</name>
        <dbReference type="ChEBI" id="CHEBI:29105"/>
    </ligand>
</feature>
<feature type="binding site" evidence="1">
    <location>
        <position position="28"/>
    </location>
    <ligand>
        <name>Zn(2+)</name>
        <dbReference type="ChEBI" id="CHEBI:29105"/>
    </ligand>
</feature>
<feature type="binding site" evidence="1">
    <location>
        <position position="32"/>
    </location>
    <ligand>
        <name>Zn(2+)</name>
        <dbReference type="ChEBI" id="CHEBI:29105"/>
    </ligand>
</feature>
<organism>
    <name type="scientific">Escherichia coli (strain SMS-3-5 / SECEC)</name>
    <dbReference type="NCBI Taxonomy" id="439855"/>
    <lineage>
        <taxon>Bacteria</taxon>
        <taxon>Pseudomonadati</taxon>
        <taxon>Pseudomonadota</taxon>
        <taxon>Gammaproteobacteria</taxon>
        <taxon>Enterobacterales</taxon>
        <taxon>Enterobacteriaceae</taxon>
        <taxon>Escherichia</taxon>
    </lineage>
</organism>
<dbReference type="EMBL" id="CP000970">
    <property type="protein sequence ID" value="ACB18912.1"/>
    <property type="molecule type" value="Genomic_DNA"/>
</dbReference>
<dbReference type="RefSeq" id="WP_000005042.1">
    <property type="nucleotide sequence ID" value="NC_010498.1"/>
</dbReference>
<dbReference type="SMR" id="B1LG37"/>
<dbReference type="GeneID" id="93777334"/>
<dbReference type="KEGG" id="ecm:EcSMS35_0105"/>
<dbReference type="HOGENOM" id="CLU_178280_3_1_6"/>
<dbReference type="Proteomes" id="UP000007011">
    <property type="component" value="Chromosome"/>
</dbReference>
<dbReference type="GO" id="GO:0008657">
    <property type="term" value="F:DNA topoisomerase type II (double strand cut, ATP-hydrolyzing) inhibitor activity"/>
    <property type="evidence" value="ECO:0007669"/>
    <property type="project" value="UniProtKB-UniRule"/>
</dbReference>
<dbReference type="GO" id="GO:0008270">
    <property type="term" value="F:zinc ion binding"/>
    <property type="evidence" value="ECO:0007669"/>
    <property type="project" value="UniProtKB-UniRule"/>
</dbReference>
<dbReference type="GO" id="GO:0006355">
    <property type="term" value="P:regulation of DNA-templated transcription"/>
    <property type="evidence" value="ECO:0007669"/>
    <property type="project" value="InterPro"/>
</dbReference>
<dbReference type="FunFam" id="3.30.50.10:FF:000026">
    <property type="entry name" value="DNA gyrase inhibitor YacG"/>
    <property type="match status" value="1"/>
</dbReference>
<dbReference type="Gene3D" id="3.30.50.10">
    <property type="entry name" value="Erythroid Transcription Factor GATA-1, subunit A"/>
    <property type="match status" value="1"/>
</dbReference>
<dbReference type="HAMAP" id="MF_00649">
    <property type="entry name" value="DNA_gyrase_inhibitor_YacG"/>
    <property type="match status" value="1"/>
</dbReference>
<dbReference type="InterPro" id="IPR005584">
    <property type="entry name" value="DNA_gyrase_inhibitor_YacG"/>
</dbReference>
<dbReference type="InterPro" id="IPR013088">
    <property type="entry name" value="Znf_NHR/GATA"/>
</dbReference>
<dbReference type="NCBIfam" id="NF001638">
    <property type="entry name" value="PRK00418.1"/>
    <property type="match status" value="1"/>
</dbReference>
<dbReference type="PANTHER" id="PTHR36150">
    <property type="entry name" value="DNA GYRASE INHIBITOR YACG"/>
    <property type="match status" value="1"/>
</dbReference>
<dbReference type="PANTHER" id="PTHR36150:SF1">
    <property type="entry name" value="DNA GYRASE INHIBITOR YACG"/>
    <property type="match status" value="1"/>
</dbReference>
<dbReference type="Pfam" id="PF03884">
    <property type="entry name" value="YacG"/>
    <property type="match status" value="1"/>
</dbReference>
<dbReference type="SUPFAM" id="SSF57716">
    <property type="entry name" value="Glucocorticoid receptor-like (DNA-binding domain)"/>
    <property type="match status" value="1"/>
</dbReference>
<keyword id="KW-0479">Metal-binding</keyword>
<keyword id="KW-0862">Zinc</keyword>
<proteinExistence type="inferred from homology"/>